<feature type="chain" id="PRO_0000349765" description="tRNA-specific 2-thiouridylase MnmA">
    <location>
        <begin position="1"/>
        <end position="359"/>
    </location>
</feature>
<feature type="region of interest" description="Interaction with target base in tRNA" evidence="1">
    <location>
        <begin position="95"/>
        <end position="97"/>
    </location>
</feature>
<feature type="region of interest" description="Interaction with tRNA" evidence="1">
    <location>
        <begin position="147"/>
        <end position="149"/>
    </location>
</feature>
<feature type="region of interest" description="Interaction with tRNA" evidence="1">
    <location>
        <begin position="309"/>
        <end position="310"/>
    </location>
</feature>
<feature type="active site" description="Nucleophile" evidence="1">
    <location>
        <position position="100"/>
    </location>
</feature>
<feature type="active site" description="Cysteine persulfide intermediate" evidence="1">
    <location>
        <position position="197"/>
    </location>
</feature>
<feature type="binding site" evidence="1">
    <location>
        <begin position="9"/>
        <end position="16"/>
    </location>
    <ligand>
        <name>ATP</name>
        <dbReference type="ChEBI" id="CHEBI:30616"/>
    </ligand>
</feature>
<feature type="binding site" evidence="1">
    <location>
        <position position="35"/>
    </location>
    <ligand>
        <name>ATP</name>
        <dbReference type="ChEBI" id="CHEBI:30616"/>
    </ligand>
</feature>
<feature type="binding site" evidence="1">
    <location>
        <position position="124"/>
    </location>
    <ligand>
        <name>ATP</name>
        <dbReference type="ChEBI" id="CHEBI:30616"/>
    </ligand>
</feature>
<feature type="site" description="Interaction with tRNA" evidence="1">
    <location>
        <position position="125"/>
    </location>
</feature>
<feature type="site" description="Interaction with tRNA" evidence="1">
    <location>
        <position position="342"/>
    </location>
</feature>
<feature type="disulfide bond" description="Alternate" evidence="1">
    <location>
        <begin position="100"/>
        <end position="197"/>
    </location>
</feature>
<proteinExistence type="inferred from homology"/>
<sequence>MSGKRVVVGLSGGVDSSVTAWLLKQQGYEVIGLFMKNWEDDDDSEYCSTRQDWLDVASVADVIGVDVEAVNFAAEYKDRVFADFLREYSAGRTPNPDVLCNAEIKFKAFLDHAMSLGANTIATGHYARVRQAANGKFELLKAFDHTKDQSYFLHRLNQAQLSRTLFPLGEIPKTRVREIAAEIGLPNAKKKDSTGICFIGERPFRDFLNRYLPTQPGPMKTPEGKVVGEHIGLAFYTLGQRKGIGLGGSRDGSGDAWYVARKDMASNTLYVVQGHDHPWLLTSELNAADLSWVAGEPPAAGATMAAKTRYRQSDAPCRVVAAEGDALKLSFAEPQWAVTPGQSAVLYDGDVCLGGGIIQ</sequence>
<protein>
    <recommendedName>
        <fullName evidence="1">tRNA-specific 2-thiouridylase MnmA</fullName>
        <ecNumber evidence="1">2.8.1.13</ecNumber>
    </recommendedName>
</protein>
<comment type="function">
    <text evidence="1">Catalyzes the 2-thiolation of uridine at the wobble position (U34) of tRNA, leading to the formation of s(2)U34.</text>
</comment>
<comment type="catalytic activity">
    <reaction evidence="1">
        <text>S-sulfanyl-L-cysteinyl-[protein] + uridine(34) in tRNA + AH2 + ATP = 2-thiouridine(34) in tRNA + L-cysteinyl-[protein] + A + AMP + diphosphate + H(+)</text>
        <dbReference type="Rhea" id="RHEA:47032"/>
        <dbReference type="Rhea" id="RHEA-COMP:10131"/>
        <dbReference type="Rhea" id="RHEA-COMP:11726"/>
        <dbReference type="Rhea" id="RHEA-COMP:11727"/>
        <dbReference type="Rhea" id="RHEA-COMP:11728"/>
        <dbReference type="ChEBI" id="CHEBI:13193"/>
        <dbReference type="ChEBI" id="CHEBI:15378"/>
        <dbReference type="ChEBI" id="CHEBI:17499"/>
        <dbReference type="ChEBI" id="CHEBI:29950"/>
        <dbReference type="ChEBI" id="CHEBI:30616"/>
        <dbReference type="ChEBI" id="CHEBI:33019"/>
        <dbReference type="ChEBI" id="CHEBI:61963"/>
        <dbReference type="ChEBI" id="CHEBI:65315"/>
        <dbReference type="ChEBI" id="CHEBI:87170"/>
        <dbReference type="ChEBI" id="CHEBI:456215"/>
        <dbReference type="EC" id="2.8.1.13"/>
    </reaction>
</comment>
<comment type="subcellular location">
    <subcellularLocation>
        <location evidence="1">Cytoplasm</location>
    </subcellularLocation>
</comment>
<comment type="similarity">
    <text evidence="1">Belongs to the MnmA/TRMU family.</text>
</comment>
<organism>
    <name type="scientific">Cupriavidus metallidurans (strain ATCC 43123 / DSM 2839 / NBRC 102507 / CH34)</name>
    <name type="common">Ralstonia metallidurans</name>
    <dbReference type="NCBI Taxonomy" id="266264"/>
    <lineage>
        <taxon>Bacteria</taxon>
        <taxon>Pseudomonadati</taxon>
        <taxon>Pseudomonadota</taxon>
        <taxon>Betaproteobacteria</taxon>
        <taxon>Burkholderiales</taxon>
        <taxon>Burkholderiaceae</taxon>
        <taxon>Cupriavidus</taxon>
    </lineage>
</organism>
<gene>
    <name evidence="1" type="primary">mnmA</name>
    <name type="ordered locus">Rmet_2958</name>
</gene>
<keyword id="KW-0067">ATP-binding</keyword>
<keyword id="KW-0963">Cytoplasm</keyword>
<keyword id="KW-1015">Disulfide bond</keyword>
<keyword id="KW-0547">Nucleotide-binding</keyword>
<keyword id="KW-1185">Reference proteome</keyword>
<keyword id="KW-0694">RNA-binding</keyword>
<keyword id="KW-0808">Transferase</keyword>
<keyword id="KW-0819">tRNA processing</keyword>
<keyword id="KW-0820">tRNA-binding</keyword>
<reference key="1">
    <citation type="journal article" date="2010" name="PLoS ONE">
        <title>The complete genome sequence of Cupriavidus metallidurans strain CH34, a master survivalist in harsh and anthropogenic environments.</title>
        <authorList>
            <person name="Janssen P.J."/>
            <person name="Van Houdt R."/>
            <person name="Moors H."/>
            <person name="Monsieurs P."/>
            <person name="Morin N."/>
            <person name="Michaux A."/>
            <person name="Benotmane M.A."/>
            <person name="Leys N."/>
            <person name="Vallaeys T."/>
            <person name="Lapidus A."/>
            <person name="Monchy S."/>
            <person name="Medigue C."/>
            <person name="Taghavi S."/>
            <person name="McCorkle S."/>
            <person name="Dunn J."/>
            <person name="van der Lelie D."/>
            <person name="Mergeay M."/>
        </authorList>
    </citation>
    <scope>NUCLEOTIDE SEQUENCE [LARGE SCALE GENOMIC DNA]</scope>
    <source>
        <strain>ATCC 43123 / DSM 2839 / NBRC 102507 / CH34</strain>
    </source>
</reference>
<name>MNMA_CUPMC</name>
<accession>Q1LJ45</accession>
<dbReference type="EC" id="2.8.1.13" evidence="1"/>
<dbReference type="EMBL" id="CP000352">
    <property type="protein sequence ID" value="ABF09831.1"/>
    <property type="molecule type" value="Genomic_DNA"/>
</dbReference>
<dbReference type="RefSeq" id="WP_011517496.1">
    <property type="nucleotide sequence ID" value="NC_007973.1"/>
</dbReference>
<dbReference type="SMR" id="Q1LJ45"/>
<dbReference type="STRING" id="266264.Rmet_2958"/>
<dbReference type="KEGG" id="rme:Rmet_2958"/>
<dbReference type="eggNOG" id="COG0482">
    <property type="taxonomic scope" value="Bacteria"/>
</dbReference>
<dbReference type="HOGENOM" id="CLU_035188_1_0_4"/>
<dbReference type="Proteomes" id="UP000002429">
    <property type="component" value="Chromosome"/>
</dbReference>
<dbReference type="GO" id="GO:0005737">
    <property type="term" value="C:cytoplasm"/>
    <property type="evidence" value="ECO:0007669"/>
    <property type="project" value="UniProtKB-SubCell"/>
</dbReference>
<dbReference type="GO" id="GO:0005524">
    <property type="term" value="F:ATP binding"/>
    <property type="evidence" value="ECO:0007669"/>
    <property type="project" value="UniProtKB-KW"/>
</dbReference>
<dbReference type="GO" id="GO:0000049">
    <property type="term" value="F:tRNA binding"/>
    <property type="evidence" value="ECO:0007669"/>
    <property type="project" value="UniProtKB-KW"/>
</dbReference>
<dbReference type="GO" id="GO:0103016">
    <property type="term" value="F:tRNA-uridine 2-sulfurtransferase activity"/>
    <property type="evidence" value="ECO:0007669"/>
    <property type="project" value="UniProtKB-EC"/>
</dbReference>
<dbReference type="GO" id="GO:0002143">
    <property type="term" value="P:tRNA wobble position uridine thiolation"/>
    <property type="evidence" value="ECO:0007669"/>
    <property type="project" value="TreeGrafter"/>
</dbReference>
<dbReference type="CDD" id="cd01998">
    <property type="entry name" value="MnmA_TRMU-like"/>
    <property type="match status" value="1"/>
</dbReference>
<dbReference type="FunFam" id="2.30.30.280:FF:000001">
    <property type="entry name" value="tRNA-specific 2-thiouridylase MnmA"/>
    <property type="match status" value="1"/>
</dbReference>
<dbReference type="FunFam" id="2.40.30.10:FF:000023">
    <property type="entry name" value="tRNA-specific 2-thiouridylase MnmA"/>
    <property type="match status" value="1"/>
</dbReference>
<dbReference type="FunFam" id="3.40.50.620:FF:000004">
    <property type="entry name" value="tRNA-specific 2-thiouridylase MnmA"/>
    <property type="match status" value="1"/>
</dbReference>
<dbReference type="Gene3D" id="2.30.30.280">
    <property type="entry name" value="Adenine nucleotide alpha hydrolases-like domains"/>
    <property type="match status" value="1"/>
</dbReference>
<dbReference type="Gene3D" id="3.40.50.620">
    <property type="entry name" value="HUPs"/>
    <property type="match status" value="1"/>
</dbReference>
<dbReference type="Gene3D" id="2.40.30.10">
    <property type="entry name" value="Translation factors"/>
    <property type="match status" value="1"/>
</dbReference>
<dbReference type="HAMAP" id="MF_00144">
    <property type="entry name" value="tRNA_thiouridyl_MnmA"/>
    <property type="match status" value="1"/>
</dbReference>
<dbReference type="InterPro" id="IPR004506">
    <property type="entry name" value="MnmA-like"/>
</dbReference>
<dbReference type="InterPro" id="IPR046885">
    <property type="entry name" value="MnmA-like_C"/>
</dbReference>
<dbReference type="InterPro" id="IPR046884">
    <property type="entry name" value="MnmA-like_central"/>
</dbReference>
<dbReference type="InterPro" id="IPR023382">
    <property type="entry name" value="MnmA-like_central_sf"/>
</dbReference>
<dbReference type="InterPro" id="IPR014729">
    <property type="entry name" value="Rossmann-like_a/b/a_fold"/>
</dbReference>
<dbReference type="NCBIfam" id="NF001138">
    <property type="entry name" value="PRK00143.1"/>
    <property type="match status" value="1"/>
</dbReference>
<dbReference type="NCBIfam" id="TIGR00420">
    <property type="entry name" value="trmU"/>
    <property type="match status" value="1"/>
</dbReference>
<dbReference type="PANTHER" id="PTHR11933:SF5">
    <property type="entry name" value="MITOCHONDRIAL TRNA-SPECIFIC 2-THIOURIDYLASE 1"/>
    <property type="match status" value="1"/>
</dbReference>
<dbReference type="PANTHER" id="PTHR11933">
    <property type="entry name" value="TRNA 5-METHYLAMINOMETHYL-2-THIOURIDYLATE -METHYLTRANSFERASE"/>
    <property type="match status" value="1"/>
</dbReference>
<dbReference type="Pfam" id="PF03054">
    <property type="entry name" value="tRNA_Me_trans"/>
    <property type="match status" value="1"/>
</dbReference>
<dbReference type="Pfam" id="PF20258">
    <property type="entry name" value="tRNA_Me_trans_C"/>
    <property type="match status" value="1"/>
</dbReference>
<dbReference type="Pfam" id="PF20259">
    <property type="entry name" value="tRNA_Me_trans_M"/>
    <property type="match status" value="1"/>
</dbReference>
<dbReference type="SUPFAM" id="SSF52402">
    <property type="entry name" value="Adenine nucleotide alpha hydrolases-like"/>
    <property type="match status" value="1"/>
</dbReference>
<evidence type="ECO:0000255" key="1">
    <source>
        <dbReference type="HAMAP-Rule" id="MF_00144"/>
    </source>
</evidence>